<evidence type="ECO:0000255" key="1"/>
<evidence type="ECO:0000269" key="2">
    <source>
    </source>
</evidence>
<evidence type="ECO:0000305" key="3"/>
<evidence type="ECO:0000305" key="4">
    <source>
    </source>
</evidence>
<dbReference type="EC" id="1.14.16.5" evidence="2"/>
<dbReference type="EMBL" id="AK131284">
    <property type="protein sequence ID" value="BAD18458.1"/>
    <property type="molecule type" value="mRNA"/>
</dbReference>
<dbReference type="EMBL" id="CH236948">
    <property type="protein sequence ID" value="EAL24290.1"/>
    <property type="status" value="ALT_SEQ"/>
    <property type="molecule type" value="Genomic_DNA"/>
</dbReference>
<dbReference type="EMBL" id="BC108676">
    <property type="protein sequence ID" value="AAI08677.1"/>
    <property type="molecule type" value="mRNA"/>
</dbReference>
<dbReference type="CCDS" id="CCDS34604.1"/>
<dbReference type="RefSeq" id="NP_001004320.1">
    <property type="nucleotide sequence ID" value="NM_001004320.2"/>
</dbReference>
<dbReference type="BioGRID" id="134295">
    <property type="interactions" value="1"/>
</dbReference>
<dbReference type="FunCoup" id="Q6ZNB7">
    <property type="interactions" value="238"/>
</dbReference>
<dbReference type="IntAct" id="Q6ZNB7">
    <property type="interactions" value="2"/>
</dbReference>
<dbReference type="STRING" id="9606.ENSP00000341662"/>
<dbReference type="SwissLipids" id="SLP:000000633"/>
<dbReference type="GlyGen" id="Q6ZNB7">
    <property type="glycosylation" value="2 sites, 1 O-linked glycan (1 site)"/>
</dbReference>
<dbReference type="iPTMnet" id="Q6ZNB7"/>
<dbReference type="PhosphoSitePlus" id="Q6ZNB7"/>
<dbReference type="BioMuta" id="AGMO"/>
<dbReference type="DMDM" id="74710656"/>
<dbReference type="jPOST" id="Q6ZNB7"/>
<dbReference type="MassIVE" id="Q6ZNB7"/>
<dbReference type="PaxDb" id="9606-ENSP00000341662"/>
<dbReference type="PeptideAtlas" id="Q6ZNB7"/>
<dbReference type="ProteomicsDB" id="68010"/>
<dbReference type="TopDownProteomics" id="Q6ZNB7"/>
<dbReference type="Antibodypedia" id="25207">
    <property type="antibodies" value="55 antibodies from 12 providers"/>
</dbReference>
<dbReference type="DNASU" id="392636"/>
<dbReference type="Ensembl" id="ENST00000342526.8">
    <property type="protein sequence ID" value="ENSP00000341662.3"/>
    <property type="gene ID" value="ENSG00000187546.14"/>
</dbReference>
<dbReference type="GeneID" id="392636"/>
<dbReference type="KEGG" id="hsa:392636"/>
<dbReference type="MANE-Select" id="ENST00000342526.8">
    <property type="protein sequence ID" value="ENSP00000341662.3"/>
    <property type="RefSeq nucleotide sequence ID" value="NM_001004320.2"/>
    <property type="RefSeq protein sequence ID" value="NP_001004320.1"/>
</dbReference>
<dbReference type="AGR" id="HGNC:33784"/>
<dbReference type="CTD" id="392636"/>
<dbReference type="DisGeNET" id="392636"/>
<dbReference type="GeneCards" id="AGMO"/>
<dbReference type="HGNC" id="HGNC:33784">
    <property type="gene designation" value="AGMO"/>
</dbReference>
<dbReference type="HPA" id="ENSG00000187546">
    <property type="expression patterns" value="Tissue enriched (liver)"/>
</dbReference>
<dbReference type="MalaCards" id="AGMO"/>
<dbReference type="MIM" id="613738">
    <property type="type" value="gene"/>
</dbReference>
<dbReference type="neXtProt" id="NX_Q6ZNB7"/>
<dbReference type="OpenTargets" id="ENSG00000187546"/>
<dbReference type="PharmGKB" id="PA162406334"/>
<dbReference type="VEuPathDB" id="HostDB:ENSG00000187546"/>
<dbReference type="eggNOG" id="KOG0872">
    <property type="taxonomic scope" value="Eukaryota"/>
</dbReference>
<dbReference type="GeneTree" id="ENSGT00440000033807"/>
<dbReference type="HOGENOM" id="CLU_033631_2_1_1"/>
<dbReference type="InParanoid" id="Q6ZNB7"/>
<dbReference type="OMA" id="FMPTGWR"/>
<dbReference type="OrthoDB" id="6354873at2759"/>
<dbReference type="PAN-GO" id="Q6ZNB7">
    <property type="GO annotations" value="3 GO annotations based on evolutionary models"/>
</dbReference>
<dbReference type="PhylomeDB" id="Q6ZNB7"/>
<dbReference type="TreeFam" id="TF314881"/>
<dbReference type="BRENDA" id="1.14.16.5">
    <property type="organism ID" value="2681"/>
</dbReference>
<dbReference type="PathwayCommons" id="Q6ZNB7"/>
<dbReference type="Reactome" id="R-HSA-75109">
    <property type="pathway name" value="Triglyceride biosynthesis"/>
</dbReference>
<dbReference type="SABIO-RK" id="Q6ZNB7"/>
<dbReference type="SignaLink" id="Q6ZNB7"/>
<dbReference type="BioGRID-ORCS" id="392636">
    <property type="hits" value="10 hits in 1155 CRISPR screens"/>
</dbReference>
<dbReference type="ChiTaRS" id="AGMO">
    <property type="organism name" value="human"/>
</dbReference>
<dbReference type="GenomeRNAi" id="392636"/>
<dbReference type="Pharos" id="Q6ZNB7">
    <property type="development level" value="Tbio"/>
</dbReference>
<dbReference type="PRO" id="PR:Q6ZNB7"/>
<dbReference type="Proteomes" id="UP000005640">
    <property type="component" value="Chromosome 7"/>
</dbReference>
<dbReference type="RNAct" id="Q6ZNB7">
    <property type="molecule type" value="protein"/>
</dbReference>
<dbReference type="Bgee" id="ENSG00000187546">
    <property type="expression patterns" value="Expressed in liver and 91 other cell types or tissues"/>
</dbReference>
<dbReference type="ExpressionAtlas" id="Q6ZNB7">
    <property type="expression patterns" value="baseline and differential"/>
</dbReference>
<dbReference type="GO" id="GO:0005783">
    <property type="term" value="C:endoplasmic reticulum"/>
    <property type="evidence" value="ECO:0000314"/>
    <property type="project" value="UniProtKB"/>
</dbReference>
<dbReference type="GO" id="GO:0005789">
    <property type="term" value="C:endoplasmic reticulum membrane"/>
    <property type="evidence" value="ECO:0000304"/>
    <property type="project" value="Reactome"/>
</dbReference>
<dbReference type="GO" id="GO:0050479">
    <property type="term" value="F:glyceryl-ether monooxygenase activity"/>
    <property type="evidence" value="ECO:0000314"/>
    <property type="project" value="UniProtKB"/>
</dbReference>
<dbReference type="GO" id="GO:0005506">
    <property type="term" value="F:iron ion binding"/>
    <property type="evidence" value="ECO:0000315"/>
    <property type="project" value="UniProtKB"/>
</dbReference>
<dbReference type="GO" id="GO:0046485">
    <property type="term" value="P:ether lipid metabolic process"/>
    <property type="evidence" value="ECO:0000314"/>
    <property type="project" value="UniProtKB"/>
</dbReference>
<dbReference type="GO" id="GO:0006643">
    <property type="term" value="P:membrane lipid metabolic process"/>
    <property type="evidence" value="ECO:0000314"/>
    <property type="project" value="UniProtKB"/>
</dbReference>
<dbReference type="GO" id="GO:0019432">
    <property type="term" value="P:triglyceride biosynthetic process"/>
    <property type="evidence" value="ECO:0000304"/>
    <property type="project" value="Reactome"/>
</dbReference>
<dbReference type="InterPro" id="IPR056853">
    <property type="entry name" value="AGMP_C"/>
</dbReference>
<dbReference type="InterPro" id="IPR006694">
    <property type="entry name" value="Fatty_acid_hydroxylase"/>
</dbReference>
<dbReference type="InterPro" id="IPR051689">
    <property type="entry name" value="Sterol_desaturase/TMEM195"/>
</dbReference>
<dbReference type="PANTHER" id="PTHR21624:SF1">
    <property type="entry name" value="ALKYLGLYCEROL MONOOXYGENASE"/>
    <property type="match status" value="1"/>
</dbReference>
<dbReference type="PANTHER" id="PTHR21624">
    <property type="entry name" value="STEROL DESATURASE-RELATED PROTEIN"/>
    <property type="match status" value="1"/>
</dbReference>
<dbReference type="Pfam" id="PF24858">
    <property type="entry name" value="AGMP_C"/>
    <property type="match status" value="1"/>
</dbReference>
<dbReference type="Pfam" id="PF04116">
    <property type="entry name" value="FA_hydroxylase"/>
    <property type="match status" value="1"/>
</dbReference>
<gene>
    <name type="primary">AGMO</name>
    <name type="synonym">TMEM195</name>
</gene>
<organism>
    <name type="scientific">Homo sapiens</name>
    <name type="common">Human</name>
    <dbReference type="NCBI Taxonomy" id="9606"/>
    <lineage>
        <taxon>Eukaryota</taxon>
        <taxon>Metazoa</taxon>
        <taxon>Chordata</taxon>
        <taxon>Craniata</taxon>
        <taxon>Vertebrata</taxon>
        <taxon>Euteleostomi</taxon>
        <taxon>Mammalia</taxon>
        <taxon>Eutheria</taxon>
        <taxon>Euarchontoglires</taxon>
        <taxon>Primates</taxon>
        <taxon>Haplorrhini</taxon>
        <taxon>Catarrhini</taxon>
        <taxon>Hominidae</taxon>
        <taxon>Homo</taxon>
    </lineage>
</organism>
<proteinExistence type="evidence at protein level"/>
<keyword id="KW-0256">Endoplasmic reticulum</keyword>
<keyword id="KW-0408">Iron</keyword>
<keyword id="KW-0443">Lipid metabolism</keyword>
<keyword id="KW-0472">Membrane</keyword>
<keyword id="KW-0560">Oxidoreductase</keyword>
<keyword id="KW-1267">Proteomics identification</keyword>
<keyword id="KW-1185">Reference proteome</keyword>
<keyword id="KW-0812">Transmembrane</keyword>
<keyword id="KW-1133">Transmembrane helix</keyword>
<sequence>MKNPEAQQDVSVSQGFRMLFYTMKPSETSFQTLEEVPDYVKKATPFFISLMLLELVVSWILKGKPPGRLDDALTSISAGVLSRLPSLFFRSIELTSYIYIWENYRLFNLPWDSPWTWYSAFLGVDFGYYWFHRMAHEVNIMWAGHQTHHSSEDYNLSTALRQSVLQIYTSWIFYSPLALFIPPSVYAVHLQFNLLYQFWIHTEVINNLGPLELILNTPSHHRVHHGRNRYCIDKNYAGVLIIWDKIFGTFEAENEKVVYGLTHPINTFEPIKVQFHHLFSIWTTFWATPGFFNKFSVIFKGPGWGPGKPRLGLSEEIPEVTGKEVPFSSSSSQLLKIYTVVQFALMLAFYEETFADTAALSQVTLLLRVCFIILTLTSIGFLLDQRPKAAIMETLRCLMFLMLYRFGHLKPLVPSLSSAFEIVFSICIAFWGVRSMKQLTSHPWK</sequence>
<name>ALKMO_HUMAN</name>
<comment type="function">
    <text evidence="2">Glyceryl-ether monooxygenase that cleaves the O-alkyl bond of ether lipids. Ether lipids are essential components of brain membranes.</text>
</comment>
<comment type="catalytic activity">
    <reaction evidence="2">
        <text>1-O-(1,2-saturated-alkyl)-sn-glycerol + (6R)-L-erythro-5,6,7,8-tetrahydrobiopterin + O2 = a 1-(1-hydroxyalkyl)-sn-glycerol + (6R)-L-erythro-6,7-dihydrobiopterin + H2O</text>
        <dbReference type="Rhea" id="RHEA:36255"/>
        <dbReference type="ChEBI" id="CHEBI:15377"/>
        <dbReference type="ChEBI" id="CHEBI:15379"/>
        <dbReference type="ChEBI" id="CHEBI:43120"/>
        <dbReference type="ChEBI" id="CHEBI:59560"/>
        <dbReference type="ChEBI" id="CHEBI:73418"/>
        <dbReference type="ChEBI" id="CHEBI:83957"/>
        <dbReference type="EC" id="1.14.16.5"/>
    </reaction>
</comment>
<comment type="cofactor">
    <cofactor evidence="4">
        <name>Fe cation</name>
        <dbReference type="ChEBI" id="CHEBI:24875"/>
    </cofactor>
</comment>
<comment type="biophysicochemical properties">
    <kinetics>
        <KM evidence="2">11 uM for 1-O pyrenedecyl glycerol (in presence of ALDH3A2)</KM>
        <KM evidence="2">2.58 uM for tetrahydrobiopterin (in presence of ALDH3A2)</KM>
    </kinetics>
</comment>
<comment type="interaction">
    <interactant intactId="EBI-18509181">
        <id>Q6ZNB7</id>
    </interactant>
    <interactant intactId="EBI-13059134">
        <id>Q13520</id>
        <label>AQP6</label>
    </interactant>
    <organismsDiffer>false</organismsDiffer>
    <experiments>3</experiments>
</comment>
<comment type="subcellular location">
    <subcellularLocation>
        <location evidence="2">Endoplasmic reticulum membrane</location>
        <topology evidence="2">Multi-pass membrane protein</topology>
    </subcellularLocation>
</comment>
<comment type="similarity">
    <text evidence="3">Belongs to the sterol desaturase family. TMEM195 subfamily.</text>
</comment>
<comment type="sequence caution" evidence="3">
    <conflict type="erroneous gene model prediction">
        <sequence resource="EMBL-CDS" id="EAL24290"/>
    </conflict>
</comment>
<feature type="chain" id="PRO_0000299300" description="Alkylglycerol monooxygenase">
    <location>
        <begin position="1"/>
        <end position="445"/>
    </location>
</feature>
<feature type="transmembrane region" description="Helical" evidence="1">
    <location>
        <begin position="43"/>
        <end position="63"/>
    </location>
</feature>
<feature type="transmembrane region" description="Helical" evidence="1">
    <location>
        <begin position="111"/>
        <end position="131"/>
    </location>
</feature>
<feature type="transmembrane region" description="Helical" evidence="1">
    <location>
        <begin position="334"/>
        <end position="354"/>
    </location>
</feature>
<feature type="transmembrane region" description="Helical" evidence="1">
    <location>
        <begin position="363"/>
        <end position="383"/>
    </location>
</feature>
<feature type="transmembrane region" description="Helical" evidence="1">
    <location>
        <begin position="413"/>
        <end position="433"/>
    </location>
</feature>
<feature type="domain" description="Fatty acid hydroxylase" evidence="1">
    <location>
        <begin position="120"/>
        <end position="249"/>
    </location>
</feature>
<feature type="short sequence motif" description="Histidine box-1">
    <location>
        <begin position="132"/>
        <end position="136"/>
    </location>
</feature>
<feature type="short sequence motif" description="Histidine box-2">
    <location>
        <begin position="145"/>
        <end position="149"/>
    </location>
</feature>
<feature type="short sequence motif" description="Histidine box-3">
    <location>
        <begin position="221"/>
        <end position="225"/>
    </location>
</feature>
<feature type="sequence variant" id="VAR_062201" description="In dbSNP:rs58564185.">
    <original>F</original>
    <variation>L</variation>
    <location>
        <position position="279"/>
    </location>
</feature>
<feature type="sequence variant" id="VAR_062202" description="In dbSNP:rs59160822.">
    <original>S</original>
    <variation>Y</variation>
    <location>
        <position position="280"/>
    </location>
</feature>
<feature type="mutagenesis site" description="Loss of function; when associated with A-136; A-145; A-148; A-149; A-221; A-224 and A-225." evidence="2">
    <original>H</original>
    <variation>A</variation>
    <location>
        <position position="132"/>
    </location>
</feature>
<feature type="mutagenesis site" description="Loss of function; when associated with A-132; A-145; A-148; A-149; A-221; A-224 and A-225." evidence="2">
    <original>H</original>
    <variation>A</variation>
    <location>
        <position position="136"/>
    </location>
</feature>
<feature type="mutagenesis site" description="Loss of function; when associated with A-132; A-136; A-148; A-149; A-221; A-224 and A-225." evidence="2">
    <original>H</original>
    <variation>A</variation>
    <location>
        <position position="145"/>
    </location>
</feature>
<feature type="mutagenesis site" description="Loss of function; when associated with A-132; A-136; A-145; A-149; A-221; A-224 and A-225." evidence="2">
    <original>H</original>
    <variation>A</variation>
    <location>
        <position position="148"/>
    </location>
</feature>
<feature type="mutagenesis site" description="Loss of function; when associated with A-132; A-136; A-145; A-148; A-221; A-224 and A-225." evidence="2">
    <original>H</original>
    <variation>A</variation>
    <location>
        <position position="149"/>
    </location>
</feature>
<feature type="mutagenesis site" description="Loss of function; when associated with A-132; A-136; A-145; A-148; A-149; A-224 and A-225." evidence="2">
    <original>H</original>
    <variation>A</variation>
    <location>
        <position position="221"/>
    </location>
</feature>
<feature type="mutagenesis site" description="Loss of function; when associated with A-132; A-136; A-145; A-148; A-149; A-221 and A-225." evidence="2">
    <original>H</original>
    <variation>A</variation>
    <location>
        <position position="224"/>
    </location>
</feature>
<feature type="mutagenesis site" description="Loss of function; when associated with A-132; A-136; A-145; A-148; A-149; A-221 and A-224." evidence="2">
    <original>H</original>
    <variation>A</variation>
    <location>
        <position position="225"/>
    </location>
</feature>
<accession>Q6ZNB7</accession>
<accession>A4D114</accession>
<accession>A6NCH5</accession>
<reference key="1">
    <citation type="journal article" date="2004" name="Nat. Genet.">
        <title>Complete sequencing and characterization of 21,243 full-length human cDNAs.</title>
        <authorList>
            <person name="Ota T."/>
            <person name="Suzuki Y."/>
            <person name="Nishikawa T."/>
            <person name="Otsuki T."/>
            <person name="Sugiyama T."/>
            <person name="Irie R."/>
            <person name="Wakamatsu A."/>
            <person name="Hayashi K."/>
            <person name="Sato H."/>
            <person name="Nagai K."/>
            <person name="Kimura K."/>
            <person name="Makita H."/>
            <person name="Sekine M."/>
            <person name="Obayashi M."/>
            <person name="Nishi T."/>
            <person name="Shibahara T."/>
            <person name="Tanaka T."/>
            <person name="Ishii S."/>
            <person name="Yamamoto J."/>
            <person name="Saito K."/>
            <person name="Kawai Y."/>
            <person name="Isono Y."/>
            <person name="Nakamura Y."/>
            <person name="Nagahari K."/>
            <person name="Murakami K."/>
            <person name="Yasuda T."/>
            <person name="Iwayanagi T."/>
            <person name="Wagatsuma M."/>
            <person name="Shiratori A."/>
            <person name="Sudo H."/>
            <person name="Hosoiri T."/>
            <person name="Kaku Y."/>
            <person name="Kodaira H."/>
            <person name="Kondo H."/>
            <person name="Sugawara M."/>
            <person name="Takahashi M."/>
            <person name="Kanda K."/>
            <person name="Yokoi T."/>
            <person name="Furuya T."/>
            <person name="Kikkawa E."/>
            <person name="Omura Y."/>
            <person name="Abe K."/>
            <person name="Kamihara K."/>
            <person name="Katsuta N."/>
            <person name="Sato K."/>
            <person name="Tanikawa M."/>
            <person name="Yamazaki M."/>
            <person name="Ninomiya K."/>
            <person name="Ishibashi T."/>
            <person name="Yamashita H."/>
            <person name="Murakawa K."/>
            <person name="Fujimori K."/>
            <person name="Tanai H."/>
            <person name="Kimata M."/>
            <person name="Watanabe M."/>
            <person name="Hiraoka S."/>
            <person name="Chiba Y."/>
            <person name="Ishida S."/>
            <person name="Ono Y."/>
            <person name="Takiguchi S."/>
            <person name="Watanabe S."/>
            <person name="Yosida M."/>
            <person name="Hotuta T."/>
            <person name="Kusano J."/>
            <person name="Kanehori K."/>
            <person name="Takahashi-Fujii A."/>
            <person name="Hara H."/>
            <person name="Tanase T.-O."/>
            <person name="Nomura Y."/>
            <person name="Togiya S."/>
            <person name="Komai F."/>
            <person name="Hara R."/>
            <person name="Takeuchi K."/>
            <person name="Arita M."/>
            <person name="Imose N."/>
            <person name="Musashino K."/>
            <person name="Yuuki H."/>
            <person name="Oshima A."/>
            <person name="Sasaki N."/>
            <person name="Aotsuka S."/>
            <person name="Yoshikawa Y."/>
            <person name="Matsunawa H."/>
            <person name="Ichihara T."/>
            <person name="Shiohata N."/>
            <person name="Sano S."/>
            <person name="Moriya S."/>
            <person name="Momiyama H."/>
            <person name="Satoh N."/>
            <person name="Takami S."/>
            <person name="Terashima Y."/>
            <person name="Suzuki O."/>
            <person name="Nakagawa S."/>
            <person name="Senoh A."/>
            <person name="Mizoguchi H."/>
            <person name="Goto Y."/>
            <person name="Shimizu F."/>
            <person name="Wakebe H."/>
            <person name="Hishigaki H."/>
            <person name="Watanabe T."/>
            <person name="Sugiyama A."/>
            <person name="Takemoto M."/>
            <person name="Kawakami B."/>
            <person name="Yamazaki M."/>
            <person name="Watanabe K."/>
            <person name="Kumagai A."/>
            <person name="Itakura S."/>
            <person name="Fukuzumi Y."/>
            <person name="Fujimori Y."/>
            <person name="Komiyama M."/>
            <person name="Tashiro H."/>
            <person name="Tanigami A."/>
            <person name="Fujiwara T."/>
            <person name="Ono T."/>
            <person name="Yamada K."/>
            <person name="Fujii Y."/>
            <person name="Ozaki K."/>
            <person name="Hirao M."/>
            <person name="Ohmori Y."/>
            <person name="Kawabata A."/>
            <person name="Hikiji T."/>
            <person name="Kobatake N."/>
            <person name="Inagaki H."/>
            <person name="Ikema Y."/>
            <person name="Okamoto S."/>
            <person name="Okitani R."/>
            <person name="Kawakami T."/>
            <person name="Noguchi S."/>
            <person name="Itoh T."/>
            <person name="Shigeta K."/>
            <person name="Senba T."/>
            <person name="Matsumura K."/>
            <person name="Nakajima Y."/>
            <person name="Mizuno T."/>
            <person name="Morinaga M."/>
            <person name="Sasaki M."/>
            <person name="Togashi T."/>
            <person name="Oyama M."/>
            <person name="Hata H."/>
            <person name="Watanabe M."/>
            <person name="Komatsu T."/>
            <person name="Mizushima-Sugano J."/>
            <person name="Satoh T."/>
            <person name="Shirai Y."/>
            <person name="Takahashi Y."/>
            <person name="Nakagawa K."/>
            <person name="Okumura K."/>
            <person name="Nagase T."/>
            <person name="Nomura N."/>
            <person name="Kikuchi H."/>
            <person name="Masuho Y."/>
            <person name="Yamashita R."/>
            <person name="Nakai K."/>
            <person name="Yada T."/>
            <person name="Nakamura Y."/>
            <person name="Ohara O."/>
            <person name="Isogai T."/>
            <person name="Sugano S."/>
        </authorList>
    </citation>
    <scope>NUCLEOTIDE SEQUENCE [LARGE SCALE MRNA]</scope>
</reference>
<reference key="2">
    <citation type="journal article" date="2003" name="Science">
        <title>Human chromosome 7: DNA sequence and biology.</title>
        <authorList>
            <person name="Scherer S.W."/>
            <person name="Cheung J."/>
            <person name="MacDonald J.R."/>
            <person name="Osborne L.R."/>
            <person name="Nakabayashi K."/>
            <person name="Herbrick J.-A."/>
            <person name="Carson A.R."/>
            <person name="Parker-Katiraee L."/>
            <person name="Skaug J."/>
            <person name="Khaja R."/>
            <person name="Zhang J."/>
            <person name="Hudek A.K."/>
            <person name="Li M."/>
            <person name="Haddad M."/>
            <person name="Duggan G.E."/>
            <person name="Fernandez B.A."/>
            <person name="Kanematsu E."/>
            <person name="Gentles S."/>
            <person name="Christopoulos C.C."/>
            <person name="Choufani S."/>
            <person name="Kwasnicka D."/>
            <person name="Zheng X.H."/>
            <person name="Lai Z."/>
            <person name="Nusskern D.R."/>
            <person name="Zhang Q."/>
            <person name="Gu Z."/>
            <person name="Lu F."/>
            <person name="Zeesman S."/>
            <person name="Nowaczyk M.J."/>
            <person name="Teshima I."/>
            <person name="Chitayat D."/>
            <person name="Shuman C."/>
            <person name="Weksberg R."/>
            <person name="Zackai E.H."/>
            <person name="Grebe T.A."/>
            <person name="Cox S.R."/>
            <person name="Kirkpatrick S.J."/>
            <person name="Rahman N."/>
            <person name="Friedman J.M."/>
            <person name="Heng H.H.Q."/>
            <person name="Pelicci P.G."/>
            <person name="Lo-Coco F."/>
            <person name="Belloni E."/>
            <person name="Shaffer L.G."/>
            <person name="Pober B."/>
            <person name="Morton C.C."/>
            <person name="Gusella J.F."/>
            <person name="Bruns G.A.P."/>
            <person name="Korf B.R."/>
            <person name="Quade B.J."/>
            <person name="Ligon A.H."/>
            <person name="Ferguson H."/>
            <person name="Higgins A.W."/>
            <person name="Leach N.T."/>
            <person name="Herrick S.R."/>
            <person name="Lemyre E."/>
            <person name="Farra C.G."/>
            <person name="Kim H.-G."/>
            <person name="Summers A.M."/>
            <person name="Gripp K.W."/>
            <person name="Roberts W."/>
            <person name="Szatmari P."/>
            <person name="Winsor E.J.T."/>
            <person name="Grzeschik K.-H."/>
            <person name="Teebi A."/>
            <person name="Minassian B.A."/>
            <person name="Kere J."/>
            <person name="Armengol L."/>
            <person name="Pujana M.A."/>
            <person name="Estivill X."/>
            <person name="Wilson M.D."/>
            <person name="Koop B.F."/>
            <person name="Tosi S."/>
            <person name="Moore G.E."/>
            <person name="Boright A.P."/>
            <person name="Zlotorynski E."/>
            <person name="Kerem B."/>
            <person name="Kroisel P.M."/>
            <person name="Petek E."/>
            <person name="Oscier D.G."/>
            <person name="Mould S.J."/>
            <person name="Doehner H."/>
            <person name="Doehner K."/>
            <person name="Rommens J.M."/>
            <person name="Vincent J.B."/>
            <person name="Venter J.C."/>
            <person name="Li P.W."/>
            <person name="Mural R.J."/>
            <person name="Adams M.D."/>
            <person name="Tsui L.-C."/>
        </authorList>
    </citation>
    <scope>NUCLEOTIDE SEQUENCE [LARGE SCALE GENOMIC DNA]</scope>
</reference>
<reference key="3">
    <citation type="journal article" date="2004" name="Genome Res.">
        <title>The status, quality, and expansion of the NIH full-length cDNA project: the Mammalian Gene Collection (MGC).</title>
        <authorList>
            <consortium name="The MGC Project Team"/>
        </authorList>
    </citation>
    <scope>NUCLEOTIDE SEQUENCE [LARGE SCALE MRNA]</scope>
    <source>
        <tissue>Eye</tissue>
    </source>
</reference>
<reference key="4">
    <citation type="journal article" date="2010" name="Proc. Natl. Acad. Sci. U.S.A.">
        <title>Identification of the gene encoding alkylglycerol monooxygenase defines a third class of tetrahydrobiopterin-dependent enzymes.</title>
        <authorList>
            <person name="Watschinger K."/>
            <person name="Keller M.A."/>
            <person name="Golderer G."/>
            <person name="Hermann M."/>
            <person name="Maglione M."/>
            <person name="Sarg B."/>
            <person name="Lindner H.H."/>
            <person name="Hermetter A."/>
            <person name="Werner-Felmayer G."/>
            <person name="Konrat R."/>
            <person name="Hulo N."/>
            <person name="Werner E.R."/>
        </authorList>
    </citation>
    <scope>FUNCTION</scope>
    <scope>CATALYTIC ACTIVITY</scope>
    <scope>BIOPHYSICOCHEMICAL PROPERTIES</scope>
    <scope>COFACTOR</scope>
    <scope>SUBCELLULAR LOCATION</scope>
    <scope>MUTAGENESIS OF HIS-132; HIS-136; HIS-145; HIS-148; HIS-149; HIS-221; HIS-224 AND HIS-225</scope>
</reference>
<reference key="5">
    <citation type="journal article" date="2014" name="J. Proteomics">
        <title>An enzyme assisted RP-RPLC approach for in-depth analysis of human liver phosphoproteome.</title>
        <authorList>
            <person name="Bian Y."/>
            <person name="Song C."/>
            <person name="Cheng K."/>
            <person name="Dong M."/>
            <person name="Wang F."/>
            <person name="Huang J."/>
            <person name="Sun D."/>
            <person name="Wang L."/>
            <person name="Ye M."/>
            <person name="Zou H."/>
        </authorList>
    </citation>
    <scope>IDENTIFICATION BY MASS SPECTROMETRY [LARGE SCALE ANALYSIS]</scope>
    <source>
        <tissue>Liver</tissue>
    </source>
</reference>
<protein>
    <recommendedName>
        <fullName>Alkylglycerol monooxygenase</fullName>
        <ecNumber evidence="2">1.14.16.5</ecNumber>
    </recommendedName>
    <alternativeName>
        <fullName>Transmembrane protein 195</fullName>
    </alternativeName>
</protein>